<accession>A0R082</accession>
<accession>I7GD80</accession>
<comment type="function">
    <text evidence="1">Involved in the regulation of glutamine synthetase GlnA, a key enzyme in the process to assimilate ammonia. When cellular nitrogen levels are high, the C-terminal adenylyl transferase (AT) inactivates GlnA by covalent transfer of an adenylyl group from ATP to specific tyrosine residue of GlnA, thus reducing its activity. Conversely, when nitrogen levels are low, the N-terminal adenylyl removase (AR) activates GlnA by removing the adenylyl group by phosphorolysis, increasing its activity. The regulatory region of GlnE binds the signal transduction protein PII (GlnB) which indicates the nitrogen status of the cell.</text>
</comment>
<comment type="catalytic activity">
    <reaction evidence="1">
        <text>[glutamine synthetase]-O(4)-(5'-adenylyl)-L-tyrosine + phosphate = [glutamine synthetase]-L-tyrosine + ADP</text>
        <dbReference type="Rhea" id="RHEA:43716"/>
        <dbReference type="Rhea" id="RHEA-COMP:10660"/>
        <dbReference type="Rhea" id="RHEA-COMP:10661"/>
        <dbReference type="ChEBI" id="CHEBI:43474"/>
        <dbReference type="ChEBI" id="CHEBI:46858"/>
        <dbReference type="ChEBI" id="CHEBI:83624"/>
        <dbReference type="ChEBI" id="CHEBI:456216"/>
        <dbReference type="EC" id="2.7.7.89"/>
    </reaction>
</comment>
<comment type="catalytic activity">
    <reaction evidence="1">
        <text>[glutamine synthetase]-L-tyrosine + ATP = [glutamine synthetase]-O(4)-(5'-adenylyl)-L-tyrosine + diphosphate</text>
        <dbReference type="Rhea" id="RHEA:18589"/>
        <dbReference type="Rhea" id="RHEA-COMP:10660"/>
        <dbReference type="Rhea" id="RHEA-COMP:10661"/>
        <dbReference type="ChEBI" id="CHEBI:30616"/>
        <dbReference type="ChEBI" id="CHEBI:33019"/>
        <dbReference type="ChEBI" id="CHEBI:46858"/>
        <dbReference type="ChEBI" id="CHEBI:83624"/>
        <dbReference type="EC" id="2.7.7.42"/>
    </reaction>
</comment>
<comment type="cofactor">
    <cofactor evidence="1">
        <name>Mg(2+)</name>
        <dbReference type="ChEBI" id="CHEBI:18420"/>
    </cofactor>
</comment>
<comment type="similarity">
    <text evidence="1">Belongs to the GlnE family.</text>
</comment>
<proteinExistence type="inferred from homology"/>
<keyword id="KW-0067">ATP-binding</keyword>
<keyword id="KW-0460">Magnesium</keyword>
<keyword id="KW-0511">Multifunctional enzyme</keyword>
<keyword id="KW-0547">Nucleotide-binding</keyword>
<keyword id="KW-0548">Nucleotidyltransferase</keyword>
<keyword id="KW-1185">Reference proteome</keyword>
<keyword id="KW-0808">Transferase</keyword>
<sequence length="999" mass="109400">MFVRKPATERPRLPSVGRLGLFDPHAPAHLDQLGWNTDDHVELLWSLSRAPDADAALLAMVRLADELKDDWDELNRLLLTDRPLRGRLFAVLGSSLALGDHLVAHPQSWRLLHGDVRLPSARELRETFDDAARSVDIERGASAAIPPLRDLYRDRLLVLAALDVASTVENEPVLPFVTVSAHLSDLADAALSAALIVATRTVCGDLDPRLAVIAMGKCGARELNYVSDVDVIFVGEDIEKDGRSDNLATATRVAGEMMRFAGDAFFEVDAALRPEGKRGQLVRTLDSHVAYYRRWAKTWEFQALLKARPAAGDPELGQAYIDALMPMVWTACEREDFVPEVQAMRRRVEELVPADVRSREIKLGTGGLRDVEFAVQLLQLVHGRTDESLHVASTVDALAALGEGGYVGRDDAANMTASYEFLRLLEHRLQLQRLKRTHMLPDDNDDEAYRWLARAAHIRPDGTHDAQGVLREELKRQSLRVSRLHAKLFYQPLLESVGHTALGIGEGMSAEAAERQLAALGYERPQSALAHLAALTGATGRKGRIQQILLPTLLDWLSDTPDPDAGLLAYRRLSDEHSDLRWFLGTLRDEGAVAKRLMRVLGTSAYIPELLMRAPEVIQMYADGPSGPKLLEDDRESRARALVASASRYADPVRAIAAARTLRRRELARIASADVLGMLDVIDVCKSLTAVWVAVLQAALDVVIRANTPDSGVPARIAVIGMGRLGGGELGYGSDADVMFVCEPNSGVEESVAVRWSVGVAEQVRALLGTPSADPPLEVDTGLRPEGRSGPLVRTLASYDAYYSQWAQPWEIQALLRAHRVAGDLELGERFLLMADKIRYPEGGVSASAVQEIRRIKARVDAERLPRGADPNTHTKLGRGGLADIEWTVQLLQLRYAHKVPALHNTSTLEALNAIGAAELVAEGDVELLREAWLTATRARNALVLVRGKPTDQLPGPGRQLNAVALAAGWGSDDGGEFLDNYLRVTRRAKAVVRKIFGG</sequence>
<feature type="chain" id="PRO_1000072847" description="Bifunctional glutamine synthetase adenylyltransferase/adenylyl-removing enzyme">
    <location>
        <begin position="1"/>
        <end position="999"/>
    </location>
</feature>
<feature type="region of interest" description="Adenylyl removase" evidence="1">
    <location>
        <begin position="1"/>
        <end position="493"/>
    </location>
</feature>
<feature type="region of interest" description="Adenylyl transferase" evidence="1">
    <location>
        <begin position="498"/>
        <end position="999"/>
    </location>
</feature>
<organism>
    <name type="scientific">Mycolicibacterium smegmatis (strain ATCC 700084 / mc(2)155)</name>
    <name type="common">Mycobacterium smegmatis</name>
    <dbReference type="NCBI Taxonomy" id="246196"/>
    <lineage>
        <taxon>Bacteria</taxon>
        <taxon>Bacillati</taxon>
        <taxon>Actinomycetota</taxon>
        <taxon>Actinomycetes</taxon>
        <taxon>Mycobacteriales</taxon>
        <taxon>Mycobacteriaceae</taxon>
        <taxon>Mycolicibacterium</taxon>
    </lineage>
</organism>
<gene>
    <name evidence="1" type="primary">glnE</name>
    <name type="ordered locus">MSMEG_4293</name>
    <name type="ordered locus">MSMEI_4192</name>
</gene>
<reference key="1">
    <citation type="submission" date="2006-10" db="EMBL/GenBank/DDBJ databases">
        <authorList>
            <person name="Fleischmann R.D."/>
            <person name="Dodson R.J."/>
            <person name="Haft D.H."/>
            <person name="Merkel J.S."/>
            <person name="Nelson W.C."/>
            <person name="Fraser C.M."/>
        </authorList>
    </citation>
    <scope>NUCLEOTIDE SEQUENCE [LARGE SCALE GENOMIC DNA]</scope>
    <source>
        <strain>ATCC 700084 / mc(2)155</strain>
    </source>
</reference>
<reference key="2">
    <citation type="journal article" date="2007" name="Genome Biol.">
        <title>Interrupted coding sequences in Mycobacterium smegmatis: authentic mutations or sequencing errors?</title>
        <authorList>
            <person name="Deshayes C."/>
            <person name="Perrodou E."/>
            <person name="Gallien S."/>
            <person name="Euphrasie D."/>
            <person name="Schaeffer C."/>
            <person name="Van-Dorsselaer A."/>
            <person name="Poch O."/>
            <person name="Lecompte O."/>
            <person name="Reyrat J.-M."/>
        </authorList>
    </citation>
    <scope>NUCLEOTIDE SEQUENCE [LARGE SCALE GENOMIC DNA]</scope>
    <source>
        <strain>ATCC 700084 / mc(2)155</strain>
    </source>
</reference>
<reference key="3">
    <citation type="journal article" date="2009" name="Genome Res.">
        <title>Ortho-proteogenomics: multiple proteomes investigation through orthology and a new MS-based protocol.</title>
        <authorList>
            <person name="Gallien S."/>
            <person name="Perrodou E."/>
            <person name="Carapito C."/>
            <person name="Deshayes C."/>
            <person name="Reyrat J.-M."/>
            <person name="Van Dorsselaer A."/>
            <person name="Poch O."/>
            <person name="Schaeffer C."/>
            <person name="Lecompte O."/>
        </authorList>
    </citation>
    <scope>NUCLEOTIDE SEQUENCE [LARGE SCALE GENOMIC DNA]</scope>
    <source>
        <strain>ATCC 700084 / mc(2)155</strain>
    </source>
</reference>
<name>GLNE_MYCS2</name>
<dbReference type="EC" id="2.7.7.89" evidence="1"/>
<dbReference type="EC" id="2.7.7.42" evidence="1"/>
<dbReference type="EMBL" id="CP000480">
    <property type="protein sequence ID" value="ABK72782.1"/>
    <property type="molecule type" value="Genomic_DNA"/>
</dbReference>
<dbReference type="EMBL" id="CP001663">
    <property type="protein sequence ID" value="AFP40649.1"/>
    <property type="molecule type" value="Genomic_DNA"/>
</dbReference>
<dbReference type="RefSeq" id="WP_011729708.1">
    <property type="nucleotide sequence ID" value="NZ_SIJM01000003.1"/>
</dbReference>
<dbReference type="RefSeq" id="YP_888570.1">
    <property type="nucleotide sequence ID" value="NC_008596.1"/>
</dbReference>
<dbReference type="SMR" id="A0R082"/>
<dbReference type="STRING" id="246196.MSMEG_4293"/>
<dbReference type="PaxDb" id="246196-MSMEI_4192"/>
<dbReference type="KEGG" id="msg:MSMEI_4192"/>
<dbReference type="KEGG" id="msm:MSMEG_4293"/>
<dbReference type="PATRIC" id="fig|246196.19.peg.4213"/>
<dbReference type="eggNOG" id="COG1391">
    <property type="taxonomic scope" value="Bacteria"/>
</dbReference>
<dbReference type="OrthoDB" id="9759366at2"/>
<dbReference type="Proteomes" id="UP000000757">
    <property type="component" value="Chromosome"/>
</dbReference>
<dbReference type="Proteomes" id="UP000006158">
    <property type="component" value="Chromosome"/>
</dbReference>
<dbReference type="GO" id="GO:0005829">
    <property type="term" value="C:cytosol"/>
    <property type="evidence" value="ECO:0007669"/>
    <property type="project" value="TreeGrafter"/>
</dbReference>
<dbReference type="GO" id="GO:0008882">
    <property type="term" value="F:[glutamate-ammonia-ligase] adenylyltransferase activity"/>
    <property type="evidence" value="ECO:0007669"/>
    <property type="project" value="UniProtKB-UniRule"/>
</dbReference>
<dbReference type="GO" id="GO:0047388">
    <property type="term" value="F:[glutamine synthetase]-adenylyl-L-tyrosine phosphorylase activity"/>
    <property type="evidence" value="ECO:0007669"/>
    <property type="project" value="UniProtKB-EC"/>
</dbReference>
<dbReference type="GO" id="GO:0005524">
    <property type="term" value="F:ATP binding"/>
    <property type="evidence" value="ECO:0007669"/>
    <property type="project" value="UniProtKB-UniRule"/>
</dbReference>
<dbReference type="GO" id="GO:0000287">
    <property type="term" value="F:magnesium ion binding"/>
    <property type="evidence" value="ECO:0007669"/>
    <property type="project" value="UniProtKB-UniRule"/>
</dbReference>
<dbReference type="GO" id="GO:0000820">
    <property type="term" value="P:regulation of glutamine family amino acid metabolic process"/>
    <property type="evidence" value="ECO:0007669"/>
    <property type="project" value="UniProtKB-UniRule"/>
</dbReference>
<dbReference type="CDD" id="cd05401">
    <property type="entry name" value="NT_GlnE_GlnD_like"/>
    <property type="match status" value="2"/>
</dbReference>
<dbReference type="FunFam" id="1.20.120.330:FF:000022">
    <property type="entry name" value="Bifunctional glutamine synthetase adenylyltransferase/adenylyl-removing enzyme"/>
    <property type="match status" value="1"/>
</dbReference>
<dbReference type="Gene3D" id="3.30.460.10">
    <property type="entry name" value="Beta Polymerase, domain 2"/>
    <property type="match status" value="2"/>
</dbReference>
<dbReference type="Gene3D" id="1.20.120.330">
    <property type="entry name" value="Nucleotidyltransferases domain 2"/>
    <property type="match status" value="2"/>
</dbReference>
<dbReference type="HAMAP" id="MF_00802">
    <property type="entry name" value="GlnE"/>
    <property type="match status" value="1"/>
</dbReference>
<dbReference type="InterPro" id="IPR023057">
    <property type="entry name" value="GlnE"/>
</dbReference>
<dbReference type="InterPro" id="IPR005190">
    <property type="entry name" value="GlnE_rpt_dom"/>
</dbReference>
<dbReference type="InterPro" id="IPR043519">
    <property type="entry name" value="NT_sf"/>
</dbReference>
<dbReference type="InterPro" id="IPR013546">
    <property type="entry name" value="PII_UdlTrfase/GS_AdlTrfase"/>
</dbReference>
<dbReference type="NCBIfam" id="NF010707">
    <property type="entry name" value="PRK14109.1"/>
    <property type="match status" value="1"/>
</dbReference>
<dbReference type="PANTHER" id="PTHR30621:SF0">
    <property type="entry name" value="BIFUNCTIONAL GLUTAMINE SYNTHETASE ADENYLYLTRANSFERASE_ADENYLYL-REMOVING ENZYME"/>
    <property type="match status" value="1"/>
</dbReference>
<dbReference type="PANTHER" id="PTHR30621">
    <property type="entry name" value="GLUTAMINE SYNTHETASE ADENYLYLTRANSFERASE"/>
    <property type="match status" value="1"/>
</dbReference>
<dbReference type="Pfam" id="PF08335">
    <property type="entry name" value="GlnD_UR_UTase"/>
    <property type="match status" value="2"/>
</dbReference>
<dbReference type="Pfam" id="PF03710">
    <property type="entry name" value="GlnE"/>
    <property type="match status" value="2"/>
</dbReference>
<dbReference type="SUPFAM" id="SSF81301">
    <property type="entry name" value="Nucleotidyltransferase"/>
    <property type="match status" value="2"/>
</dbReference>
<dbReference type="SUPFAM" id="SSF81593">
    <property type="entry name" value="Nucleotidyltransferase substrate binding subunit/domain"/>
    <property type="match status" value="2"/>
</dbReference>
<evidence type="ECO:0000255" key="1">
    <source>
        <dbReference type="HAMAP-Rule" id="MF_00802"/>
    </source>
</evidence>
<protein>
    <recommendedName>
        <fullName evidence="1">Bifunctional glutamine synthetase adenylyltransferase/adenylyl-removing enzyme</fullName>
    </recommendedName>
    <alternativeName>
        <fullName evidence="1">ATP:glutamine synthetase adenylyltransferase</fullName>
    </alternativeName>
    <alternativeName>
        <fullName evidence="1">ATase</fullName>
    </alternativeName>
    <domain>
        <recommendedName>
            <fullName evidence="1">Glutamine synthetase adenylyl-L-tyrosine phosphorylase</fullName>
            <ecNumber evidence="1">2.7.7.89</ecNumber>
        </recommendedName>
        <alternativeName>
            <fullName evidence="1">Adenylyl removase</fullName>
            <shortName evidence="1">AR</shortName>
            <shortName evidence="1">AT-N</shortName>
        </alternativeName>
    </domain>
    <domain>
        <recommendedName>
            <fullName evidence="1">Glutamine synthetase adenylyl transferase</fullName>
            <ecNumber evidence="1">2.7.7.42</ecNumber>
        </recommendedName>
        <alternativeName>
            <fullName evidence="1">Adenylyl transferase</fullName>
            <shortName evidence="1">AT</shortName>
            <shortName evidence="1">AT-C</shortName>
        </alternativeName>
    </domain>
</protein>